<organism>
    <name type="scientific">Shewanella putrefaciens (strain CN-32 / ATCC BAA-453)</name>
    <dbReference type="NCBI Taxonomy" id="319224"/>
    <lineage>
        <taxon>Bacteria</taxon>
        <taxon>Pseudomonadati</taxon>
        <taxon>Pseudomonadota</taxon>
        <taxon>Gammaproteobacteria</taxon>
        <taxon>Alteromonadales</taxon>
        <taxon>Shewanellaceae</taxon>
        <taxon>Shewanella</taxon>
    </lineage>
</organism>
<name>SPEA_SHEPC</name>
<evidence type="ECO:0000255" key="1">
    <source>
        <dbReference type="HAMAP-Rule" id="MF_01417"/>
    </source>
</evidence>
<dbReference type="EC" id="4.1.1.19" evidence="1"/>
<dbReference type="EMBL" id="CP000681">
    <property type="protein sequence ID" value="ABP75372.1"/>
    <property type="molecule type" value="Genomic_DNA"/>
</dbReference>
<dbReference type="SMR" id="A4Y5Y9"/>
<dbReference type="STRING" id="319224.Sputcn32_1647"/>
<dbReference type="KEGG" id="spc:Sputcn32_1647"/>
<dbReference type="eggNOG" id="COG1166">
    <property type="taxonomic scope" value="Bacteria"/>
</dbReference>
<dbReference type="HOGENOM" id="CLU_027243_1_0_6"/>
<dbReference type="UniPathway" id="UPA00186">
    <property type="reaction ID" value="UER00284"/>
</dbReference>
<dbReference type="GO" id="GO:0008792">
    <property type="term" value="F:arginine decarboxylase activity"/>
    <property type="evidence" value="ECO:0007669"/>
    <property type="project" value="UniProtKB-UniRule"/>
</dbReference>
<dbReference type="GO" id="GO:0046872">
    <property type="term" value="F:metal ion binding"/>
    <property type="evidence" value="ECO:0007669"/>
    <property type="project" value="UniProtKB-KW"/>
</dbReference>
<dbReference type="GO" id="GO:0006527">
    <property type="term" value="P:arginine catabolic process"/>
    <property type="evidence" value="ECO:0007669"/>
    <property type="project" value="InterPro"/>
</dbReference>
<dbReference type="GO" id="GO:0033388">
    <property type="term" value="P:putrescine biosynthetic process from arginine"/>
    <property type="evidence" value="ECO:0007669"/>
    <property type="project" value="TreeGrafter"/>
</dbReference>
<dbReference type="GO" id="GO:0008295">
    <property type="term" value="P:spermidine biosynthetic process"/>
    <property type="evidence" value="ECO:0007669"/>
    <property type="project" value="UniProtKB-UniRule"/>
</dbReference>
<dbReference type="CDD" id="cd06830">
    <property type="entry name" value="PLPDE_III_ADC"/>
    <property type="match status" value="1"/>
</dbReference>
<dbReference type="FunFam" id="1.10.287.3440:FF:000001">
    <property type="entry name" value="Biosynthetic arginine decarboxylase"/>
    <property type="match status" value="1"/>
</dbReference>
<dbReference type="FunFam" id="1.20.58.930:FF:000001">
    <property type="entry name" value="Biosynthetic arginine decarboxylase"/>
    <property type="match status" value="1"/>
</dbReference>
<dbReference type="FunFam" id="2.40.37.10:FF:000001">
    <property type="entry name" value="Biosynthetic arginine decarboxylase"/>
    <property type="match status" value="1"/>
</dbReference>
<dbReference type="FunFam" id="3.20.20.10:FF:000001">
    <property type="entry name" value="Biosynthetic arginine decarboxylase"/>
    <property type="match status" value="1"/>
</dbReference>
<dbReference type="Gene3D" id="1.10.287.3440">
    <property type="match status" value="1"/>
</dbReference>
<dbReference type="Gene3D" id="1.20.58.930">
    <property type="match status" value="1"/>
</dbReference>
<dbReference type="Gene3D" id="3.20.20.10">
    <property type="entry name" value="Alanine racemase"/>
    <property type="match status" value="1"/>
</dbReference>
<dbReference type="Gene3D" id="2.40.37.10">
    <property type="entry name" value="Lyase, Ornithine Decarboxylase, Chain A, domain 1"/>
    <property type="match status" value="1"/>
</dbReference>
<dbReference type="HAMAP" id="MF_01417">
    <property type="entry name" value="SpeA"/>
    <property type="match status" value="1"/>
</dbReference>
<dbReference type="InterPro" id="IPR009006">
    <property type="entry name" value="Ala_racemase/Decarboxylase_C"/>
</dbReference>
<dbReference type="InterPro" id="IPR040634">
    <property type="entry name" value="Arg_decarb_HB"/>
</dbReference>
<dbReference type="InterPro" id="IPR041128">
    <property type="entry name" value="Arg_decarbox_C"/>
</dbReference>
<dbReference type="InterPro" id="IPR002985">
    <property type="entry name" value="Arg_decrbxlase"/>
</dbReference>
<dbReference type="InterPro" id="IPR022644">
    <property type="entry name" value="De-COase2_N"/>
</dbReference>
<dbReference type="InterPro" id="IPR000183">
    <property type="entry name" value="Orn/DAP/Arg_de-COase"/>
</dbReference>
<dbReference type="InterPro" id="IPR029066">
    <property type="entry name" value="PLP-binding_barrel"/>
</dbReference>
<dbReference type="NCBIfam" id="NF003763">
    <property type="entry name" value="PRK05354.1"/>
    <property type="match status" value="1"/>
</dbReference>
<dbReference type="NCBIfam" id="TIGR01273">
    <property type="entry name" value="speA"/>
    <property type="match status" value="1"/>
</dbReference>
<dbReference type="PANTHER" id="PTHR43295">
    <property type="entry name" value="ARGININE DECARBOXYLASE"/>
    <property type="match status" value="1"/>
</dbReference>
<dbReference type="PANTHER" id="PTHR43295:SF9">
    <property type="entry name" value="BIOSYNTHETIC ARGININE DECARBOXYLASE"/>
    <property type="match status" value="1"/>
</dbReference>
<dbReference type="Pfam" id="PF17810">
    <property type="entry name" value="Arg_decarb_HB"/>
    <property type="match status" value="1"/>
</dbReference>
<dbReference type="Pfam" id="PF17944">
    <property type="entry name" value="Arg_decarbox_C"/>
    <property type="match status" value="1"/>
</dbReference>
<dbReference type="Pfam" id="PF02784">
    <property type="entry name" value="Orn_Arg_deC_N"/>
    <property type="match status" value="1"/>
</dbReference>
<dbReference type="PIRSF" id="PIRSF001336">
    <property type="entry name" value="Arg_decrbxlase"/>
    <property type="match status" value="1"/>
</dbReference>
<dbReference type="PRINTS" id="PR01180">
    <property type="entry name" value="ARGDCRBXLASE"/>
</dbReference>
<dbReference type="PRINTS" id="PR01179">
    <property type="entry name" value="ODADCRBXLASE"/>
</dbReference>
<dbReference type="SUPFAM" id="SSF51419">
    <property type="entry name" value="PLP-binding barrel"/>
    <property type="match status" value="1"/>
</dbReference>
<comment type="function">
    <text evidence="1">Catalyzes the biosynthesis of agmatine from arginine.</text>
</comment>
<comment type="catalytic activity">
    <reaction evidence="1">
        <text>L-arginine + H(+) = agmatine + CO2</text>
        <dbReference type="Rhea" id="RHEA:17641"/>
        <dbReference type="ChEBI" id="CHEBI:15378"/>
        <dbReference type="ChEBI" id="CHEBI:16526"/>
        <dbReference type="ChEBI" id="CHEBI:32682"/>
        <dbReference type="ChEBI" id="CHEBI:58145"/>
        <dbReference type="EC" id="4.1.1.19"/>
    </reaction>
</comment>
<comment type="cofactor">
    <cofactor evidence="1">
        <name>Mg(2+)</name>
        <dbReference type="ChEBI" id="CHEBI:18420"/>
    </cofactor>
</comment>
<comment type="cofactor">
    <cofactor evidence="1">
        <name>pyridoxal 5'-phosphate</name>
        <dbReference type="ChEBI" id="CHEBI:597326"/>
    </cofactor>
</comment>
<comment type="pathway">
    <text evidence="1">Amine and polyamine biosynthesis; agmatine biosynthesis; agmatine from L-arginine: step 1/1.</text>
</comment>
<comment type="similarity">
    <text evidence="1">Belongs to the Orn/Lys/Arg decarboxylase class-II family. SpeA subfamily.</text>
</comment>
<proteinExistence type="inferred from homology"/>
<protein>
    <recommendedName>
        <fullName evidence="1">Biosynthetic arginine decarboxylase</fullName>
        <shortName evidence="1">ADC</shortName>
        <ecNumber evidence="1">4.1.1.19</ecNumber>
    </recommendedName>
</protein>
<accession>A4Y5Y9</accession>
<reference key="1">
    <citation type="submission" date="2007-04" db="EMBL/GenBank/DDBJ databases">
        <title>Complete sequence of Shewanella putrefaciens CN-32.</title>
        <authorList>
            <consortium name="US DOE Joint Genome Institute"/>
            <person name="Copeland A."/>
            <person name="Lucas S."/>
            <person name="Lapidus A."/>
            <person name="Barry K."/>
            <person name="Detter J.C."/>
            <person name="Glavina del Rio T."/>
            <person name="Hammon N."/>
            <person name="Israni S."/>
            <person name="Dalin E."/>
            <person name="Tice H."/>
            <person name="Pitluck S."/>
            <person name="Chain P."/>
            <person name="Malfatti S."/>
            <person name="Shin M."/>
            <person name="Vergez L."/>
            <person name="Schmutz J."/>
            <person name="Larimer F."/>
            <person name="Land M."/>
            <person name="Hauser L."/>
            <person name="Kyrpides N."/>
            <person name="Mikhailova N."/>
            <person name="Romine M.F."/>
            <person name="Fredrickson J."/>
            <person name="Tiedje J."/>
            <person name="Richardson P."/>
        </authorList>
    </citation>
    <scope>NUCLEOTIDE SEQUENCE [LARGE SCALE GENOMIC DNA]</scope>
    <source>
        <strain>CN-32 / ATCC BAA-453</strain>
    </source>
</reference>
<gene>
    <name evidence="1" type="primary">speA</name>
    <name type="ordered locus">Sputcn32_1647</name>
</gene>
<keyword id="KW-0210">Decarboxylase</keyword>
<keyword id="KW-0456">Lyase</keyword>
<keyword id="KW-0460">Magnesium</keyword>
<keyword id="KW-0479">Metal-binding</keyword>
<keyword id="KW-0620">Polyamine biosynthesis</keyword>
<keyword id="KW-0663">Pyridoxal phosphate</keyword>
<keyword id="KW-0745">Spermidine biosynthesis</keyword>
<feature type="chain" id="PRO_1000024270" description="Biosynthetic arginine decarboxylase">
    <location>
        <begin position="1"/>
        <end position="637"/>
    </location>
</feature>
<feature type="binding site" evidence="1">
    <location>
        <begin position="286"/>
        <end position="296"/>
    </location>
    <ligand>
        <name>substrate</name>
    </ligand>
</feature>
<feature type="modified residue" description="N6-(pyridoxal phosphate)lysine" evidence="1">
    <location>
        <position position="101"/>
    </location>
</feature>
<sequence>MNDWSIDDARAGYNVTHWSQGFYGISDQGEVTVSPDPKNPEYKIGLNELAKDMVKAGVALPVLVRFPQILHHRVNSLCQAFDQAIQKYEYQADYLLVYPIKVNQQQTVVEEILASQASKEVPQLGLEAGSKPELMAVLAMAQKASSVIVCNGYKDNEYIRLALIGEKLGHKVYIVLEKLSELKMVLAESKRLGVTPRLGLRARLAFQGKGKWQASGGEKSKFGLSAAQILTVVDQLKQNDMLDSLQLLHFHLGSQIANIRDIRQGVSEAGRFYCELRELGASVNCFDVGGGLAVDYDGTRSQSNNSMNYGLTEYANNIVNVLTDICNEYAQPMPRIISESGRYLTAHHAVLITDVIGTEAYQPENIQPPAEESPQLLHNMWHSWSEISGRADQRALIEIYHDSQSDLQEAQSLFALGQLSLAERAWAEQANLRVCHEVQGLLSTKNRYHRPIIDELNEKLADKFFVNFSLFQSLPDAWGIDQVFPVLPLSGLDKAPERRAVMLDITCDSDGIVDQYVDGQGIETTLPVPAWSAESPYLIGFFLVGAYQEILGDMHNLFGDTNSAVVRIEENGVTNIESVLAGDTVADVLRYVNLDAVAFMRTYEELVNLHIEEDERAQILEELQVGLKGYTYLEDFS</sequence>